<proteinExistence type="inferred from homology"/>
<feature type="chain" id="PRO_0000230874" description="Transcriptional repressor NrdR">
    <location>
        <begin position="1"/>
        <end position="157"/>
    </location>
</feature>
<feature type="domain" description="ATP-cone" evidence="1">
    <location>
        <begin position="49"/>
        <end position="139"/>
    </location>
</feature>
<feature type="zinc finger region" evidence="1">
    <location>
        <begin position="3"/>
        <end position="34"/>
    </location>
</feature>
<dbReference type="EMBL" id="CR936503">
    <property type="protein sequence ID" value="CAI55706.1"/>
    <property type="molecule type" value="Genomic_DNA"/>
</dbReference>
<dbReference type="RefSeq" id="WP_011375096.1">
    <property type="nucleotide sequence ID" value="NC_007576.1"/>
</dbReference>
<dbReference type="SMR" id="Q38VS7"/>
<dbReference type="STRING" id="314315.LCA_1403"/>
<dbReference type="KEGG" id="lsa:LCA_1403"/>
<dbReference type="eggNOG" id="COG1327">
    <property type="taxonomic scope" value="Bacteria"/>
</dbReference>
<dbReference type="HOGENOM" id="CLU_108412_0_0_9"/>
<dbReference type="OrthoDB" id="9807461at2"/>
<dbReference type="Proteomes" id="UP000002707">
    <property type="component" value="Chromosome"/>
</dbReference>
<dbReference type="GO" id="GO:0005524">
    <property type="term" value="F:ATP binding"/>
    <property type="evidence" value="ECO:0007669"/>
    <property type="project" value="UniProtKB-KW"/>
</dbReference>
<dbReference type="GO" id="GO:0003677">
    <property type="term" value="F:DNA binding"/>
    <property type="evidence" value="ECO:0007669"/>
    <property type="project" value="UniProtKB-KW"/>
</dbReference>
<dbReference type="GO" id="GO:0008270">
    <property type="term" value="F:zinc ion binding"/>
    <property type="evidence" value="ECO:0007669"/>
    <property type="project" value="UniProtKB-UniRule"/>
</dbReference>
<dbReference type="GO" id="GO:0045892">
    <property type="term" value="P:negative regulation of DNA-templated transcription"/>
    <property type="evidence" value="ECO:0007669"/>
    <property type="project" value="UniProtKB-UniRule"/>
</dbReference>
<dbReference type="HAMAP" id="MF_00440">
    <property type="entry name" value="NrdR"/>
    <property type="match status" value="1"/>
</dbReference>
<dbReference type="InterPro" id="IPR005144">
    <property type="entry name" value="ATP-cone_dom"/>
</dbReference>
<dbReference type="InterPro" id="IPR055173">
    <property type="entry name" value="NrdR-like_N"/>
</dbReference>
<dbReference type="InterPro" id="IPR003796">
    <property type="entry name" value="RNR_NrdR-like"/>
</dbReference>
<dbReference type="NCBIfam" id="TIGR00244">
    <property type="entry name" value="transcriptional regulator NrdR"/>
    <property type="match status" value="1"/>
</dbReference>
<dbReference type="PANTHER" id="PTHR30455">
    <property type="entry name" value="TRANSCRIPTIONAL REPRESSOR NRDR"/>
    <property type="match status" value="1"/>
</dbReference>
<dbReference type="PANTHER" id="PTHR30455:SF2">
    <property type="entry name" value="TRANSCRIPTIONAL REPRESSOR NRDR"/>
    <property type="match status" value="1"/>
</dbReference>
<dbReference type="Pfam" id="PF03477">
    <property type="entry name" value="ATP-cone"/>
    <property type="match status" value="1"/>
</dbReference>
<dbReference type="Pfam" id="PF22811">
    <property type="entry name" value="Zn_ribbon_NrdR"/>
    <property type="match status" value="1"/>
</dbReference>
<dbReference type="PROSITE" id="PS51161">
    <property type="entry name" value="ATP_CONE"/>
    <property type="match status" value="1"/>
</dbReference>
<organism>
    <name type="scientific">Latilactobacillus sakei subsp. sakei (strain 23K)</name>
    <name type="common">Lactobacillus sakei subsp. sakei</name>
    <dbReference type="NCBI Taxonomy" id="314315"/>
    <lineage>
        <taxon>Bacteria</taxon>
        <taxon>Bacillati</taxon>
        <taxon>Bacillota</taxon>
        <taxon>Bacilli</taxon>
        <taxon>Lactobacillales</taxon>
        <taxon>Lactobacillaceae</taxon>
        <taxon>Latilactobacillus</taxon>
    </lineage>
</organism>
<protein>
    <recommendedName>
        <fullName evidence="1">Transcriptional repressor NrdR</fullName>
    </recommendedName>
</protein>
<keyword id="KW-0067">ATP-binding</keyword>
<keyword id="KW-0238">DNA-binding</keyword>
<keyword id="KW-0479">Metal-binding</keyword>
<keyword id="KW-0547">Nucleotide-binding</keyword>
<keyword id="KW-1185">Reference proteome</keyword>
<keyword id="KW-0678">Repressor</keyword>
<keyword id="KW-0804">Transcription</keyword>
<keyword id="KW-0805">Transcription regulation</keyword>
<keyword id="KW-0862">Zinc</keyword>
<keyword id="KW-0863">Zinc-finger</keyword>
<evidence type="ECO:0000255" key="1">
    <source>
        <dbReference type="HAMAP-Rule" id="MF_00440"/>
    </source>
</evidence>
<gene>
    <name evidence="1" type="primary">nrdR</name>
    <name type="ordered locus">LCA_1403</name>
</gene>
<sequence length="157" mass="18446">MLCPHCHQNSSRVIDSRPTDEGRVIRRRRECENCQFRFTTFERVEQTPLLVIKKNGTREEFNRDKLLRGLIRAAEKRPVTMEQMTEIVDEVENKIRALGENEVSSQAVGEYVMAVLPGVDEIAYIRFASVYRQFKDMNVFMAELQEMMKKEKARDQD</sequence>
<name>NRDR_LATSS</name>
<comment type="function">
    <text evidence="1">Negatively regulates transcription of bacterial ribonucleotide reductase nrd genes and operons by binding to NrdR-boxes.</text>
</comment>
<comment type="cofactor">
    <cofactor evidence="1">
        <name>Zn(2+)</name>
        <dbReference type="ChEBI" id="CHEBI:29105"/>
    </cofactor>
    <text evidence="1">Binds 1 zinc ion.</text>
</comment>
<comment type="similarity">
    <text evidence="1">Belongs to the NrdR family.</text>
</comment>
<reference key="1">
    <citation type="journal article" date="2005" name="Nat. Biotechnol.">
        <title>The complete genome sequence of the meat-borne lactic acid bacterium Lactobacillus sakei 23K.</title>
        <authorList>
            <person name="Chaillou S."/>
            <person name="Champomier-Verges M.-C."/>
            <person name="Cornet M."/>
            <person name="Crutz-Le Coq A.-M."/>
            <person name="Dudez A.-M."/>
            <person name="Martin V."/>
            <person name="Beaufils S."/>
            <person name="Darbon-Rongere E."/>
            <person name="Bossy R."/>
            <person name="Loux V."/>
            <person name="Zagorec M."/>
        </authorList>
    </citation>
    <scope>NUCLEOTIDE SEQUENCE [LARGE SCALE GENOMIC DNA]</scope>
    <source>
        <strain>23K</strain>
    </source>
</reference>
<accession>Q38VS7</accession>